<comment type="function">
    <text evidence="2">Plays a role in regulating cardiac sodium current; decreased enzymatic activity with resulting increased levels of glycerol 3-phosphate activating the DPD1L-dependent SCN5A phosphorylation pathway, may ultimately lead to decreased sodium current; cardiac sodium current may also be reduced due to alterations of NAD(H) balance induced by DPD1L.</text>
</comment>
<comment type="catalytic activity">
    <reaction evidence="2">
        <text>sn-glycerol 3-phosphate + NAD(+) = dihydroxyacetone phosphate + NADH + H(+)</text>
        <dbReference type="Rhea" id="RHEA:11092"/>
        <dbReference type="ChEBI" id="CHEBI:15378"/>
        <dbReference type="ChEBI" id="CHEBI:57540"/>
        <dbReference type="ChEBI" id="CHEBI:57597"/>
        <dbReference type="ChEBI" id="CHEBI:57642"/>
        <dbReference type="ChEBI" id="CHEBI:57945"/>
        <dbReference type="EC" id="1.1.1.8"/>
    </reaction>
    <physiologicalReaction direction="left-to-right" evidence="2">
        <dbReference type="Rhea" id="RHEA:11093"/>
    </physiologicalReaction>
</comment>
<comment type="subunit">
    <text evidence="2">Interacts with SCN5A.</text>
</comment>
<comment type="subcellular location">
    <subcellularLocation>
        <location evidence="4">Cytoplasm</location>
    </subcellularLocation>
</comment>
<comment type="alternative products">
    <event type="alternative splicing"/>
    <isoform>
        <id>Q3ULJ0-1</id>
        <name>1</name>
        <sequence type="displayed"/>
    </isoform>
    <isoform>
        <id>Q3ULJ0-2</id>
        <name>2</name>
        <sequence type="described" ref="VSP_025062"/>
    </isoform>
</comment>
<comment type="similarity">
    <text evidence="4">Belongs to the NAD-dependent glycerol-3-phosphate dehydrogenase family.</text>
</comment>
<comment type="sequence caution" evidence="4">
    <conflict type="erroneous initiation">
        <sequence resource="EMBL-CDS" id="AAH37729"/>
    </conflict>
    <text>Extended N-terminus.</text>
</comment>
<comment type="sequence caution" evidence="4">
    <conflict type="erroneous initiation">
        <sequence resource="EMBL-CDS" id="BAD32164"/>
    </conflict>
    <text>Extended N-terminus.</text>
</comment>
<gene>
    <name type="primary">Gpd1l</name>
    <name type="synonym">Kiaa0089</name>
</gene>
<dbReference type="EC" id="1.1.1.8" evidence="2"/>
<dbReference type="EMBL" id="AK172886">
    <property type="protein sequence ID" value="BAD32164.1"/>
    <property type="status" value="ALT_INIT"/>
    <property type="molecule type" value="mRNA"/>
</dbReference>
<dbReference type="EMBL" id="AK050572">
    <property type="protein sequence ID" value="BAC34327.1"/>
    <property type="molecule type" value="mRNA"/>
</dbReference>
<dbReference type="EMBL" id="AK075845">
    <property type="protein sequence ID" value="BAC36001.1"/>
    <property type="molecule type" value="mRNA"/>
</dbReference>
<dbReference type="EMBL" id="AK145475">
    <property type="protein sequence ID" value="BAE26458.1"/>
    <property type="molecule type" value="mRNA"/>
</dbReference>
<dbReference type="EMBL" id="BC037729">
    <property type="protein sequence ID" value="AAH37729.1"/>
    <property type="status" value="ALT_INIT"/>
    <property type="molecule type" value="mRNA"/>
</dbReference>
<dbReference type="CCDS" id="CCDS23598.1">
    <molecule id="Q3ULJ0-1"/>
</dbReference>
<dbReference type="RefSeq" id="NP_780589.3">
    <molecule id="Q3ULJ0-1"/>
    <property type="nucleotide sequence ID" value="NM_175380.5"/>
</dbReference>
<dbReference type="SMR" id="Q3ULJ0"/>
<dbReference type="BioGRID" id="237162">
    <property type="interactions" value="4"/>
</dbReference>
<dbReference type="FunCoup" id="Q3ULJ0">
    <property type="interactions" value="1487"/>
</dbReference>
<dbReference type="STRING" id="10090.ENSMUSP00000117509"/>
<dbReference type="GlyGen" id="Q3ULJ0">
    <property type="glycosylation" value="1 site, 1 O-linked glycan (1 site)"/>
</dbReference>
<dbReference type="iPTMnet" id="Q3ULJ0"/>
<dbReference type="PhosphoSitePlus" id="Q3ULJ0"/>
<dbReference type="SwissPalm" id="Q3ULJ0"/>
<dbReference type="jPOST" id="Q3ULJ0"/>
<dbReference type="PaxDb" id="10090-ENSMUSP00000117509"/>
<dbReference type="PeptideAtlas" id="Q3ULJ0"/>
<dbReference type="ProteomicsDB" id="271437">
    <molecule id="Q3ULJ0-1"/>
</dbReference>
<dbReference type="ProteomicsDB" id="271438">
    <molecule id="Q3ULJ0-2"/>
</dbReference>
<dbReference type="Pumba" id="Q3ULJ0"/>
<dbReference type="Antibodypedia" id="27707">
    <property type="antibodies" value="161 antibodies from 25 providers"/>
</dbReference>
<dbReference type="DNASU" id="333433"/>
<dbReference type="Ensembl" id="ENSMUST00000084853.4">
    <molecule id="Q3ULJ0-2"/>
    <property type="protein sequence ID" value="ENSMUSP00000081913.4"/>
    <property type="gene ID" value="ENSMUSG00000050627.14"/>
</dbReference>
<dbReference type="Ensembl" id="ENSMUST00000146623.8">
    <molecule id="Q3ULJ0-1"/>
    <property type="protein sequence ID" value="ENSMUSP00000117509.2"/>
    <property type="gene ID" value="ENSMUSG00000050627.14"/>
</dbReference>
<dbReference type="GeneID" id="333433"/>
<dbReference type="KEGG" id="mmu:333433"/>
<dbReference type="UCSC" id="uc009ryj.2">
    <molecule id="Q3ULJ0-1"/>
    <property type="organism name" value="mouse"/>
</dbReference>
<dbReference type="AGR" id="MGI:1289257"/>
<dbReference type="CTD" id="23171"/>
<dbReference type="MGI" id="MGI:1289257">
    <property type="gene designation" value="Gpd1l"/>
</dbReference>
<dbReference type="VEuPathDB" id="HostDB:ENSMUSG00000050627"/>
<dbReference type="eggNOG" id="KOG2711">
    <property type="taxonomic scope" value="Eukaryota"/>
</dbReference>
<dbReference type="GeneTree" id="ENSGT00390000003114"/>
<dbReference type="HOGENOM" id="CLU_033449_2_2_1"/>
<dbReference type="InParanoid" id="Q3ULJ0"/>
<dbReference type="OMA" id="YDTPPMD"/>
<dbReference type="OrthoDB" id="10263760at2759"/>
<dbReference type="PhylomeDB" id="Q3ULJ0"/>
<dbReference type="TreeFam" id="TF300836"/>
<dbReference type="Reactome" id="R-MMU-1483166">
    <property type="pathway name" value="Synthesis of PA"/>
</dbReference>
<dbReference type="BioGRID-ORCS" id="333433">
    <property type="hits" value="3 hits in 79 CRISPR screens"/>
</dbReference>
<dbReference type="ChiTaRS" id="Gpd1l">
    <property type="organism name" value="mouse"/>
</dbReference>
<dbReference type="PRO" id="PR:Q3ULJ0"/>
<dbReference type="Proteomes" id="UP000000589">
    <property type="component" value="Chromosome 9"/>
</dbReference>
<dbReference type="RNAct" id="Q3ULJ0">
    <property type="molecule type" value="protein"/>
</dbReference>
<dbReference type="Bgee" id="ENSMUSG00000050627">
    <property type="expression patterns" value="Expressed in gastrula and 230 other cell types or tissues"/>
</dbReference>
<dbReference type="ExpressionAtlas" id="Q3ULJ0">
    <property type="expression patterns" value="baseline and differential"/>
</dbReference>
<dbReference type="GO" id="GO:0005737">
    <property type="term" value="C:cytoplasm"/>
    <property type="evidence" value="ECO:0007669"/>
    <property type="project" value="UniProtKB-SubCell"/>
</dbReference>
<dbReference type="GO" id="GO:0016020">
    <property type="term" value="C:membrane"/>
    <property type="evidence" value="ECO:0000314"/>
    <property type="project" value="BHF-UCL"/>
</dbReference>
<dbReference type="GO" id="GO:0005886">
    <property type="term" value="C:plasma membrane"/>
    <property type="evidence" value="ECO:0007669"/>
    <property type="project" value="Ensembl"/>
</dbReference>
<dbReference type="GO" id="GO:0141152">
    <property type="term" value="F:glycerol-3-phosphate dehydrogenase (NAD+) activity"/>
    <property type="evidence" value="ECO:0007669"/>
    <property type="project" value="UniProtKB-EC"/>
</dbReference>
<dbReference type="GO" id="GO:0051287">
    <property type="term" value="F:NAD binding"/>
    <property type="evidence" value="ECO:0007669"/>
    <property type="project" value="InterPro"/>
</dbReference>
<dbReference type="GO" id="GO:0042803">
    <property type="term" value="F:protein homodimerization activity"/>
    <property type="evidence" value="ECO:0007669"/>
    <property type="project" value="InterPro"/>
</dbReference>
<dbReference type="GO" id="GO:0017080">
    <property type="term" value="F:sodium channel regulator activity"/>
    <property type="evidence" value="ECO:0007669"/>
    <property type="project" value="Ensembl"/>
</dbReference>
<dbReference type="GO" id="GO:0044325">
    <property type="term" value="F:transmembrane transporter binding"/>
    <property type="evidence" value="ECO:0007669"/>
    <property type="project" value="Ensembl"/>
</dbReference>
<dbReference type="GO" id="GO:0005975">
    <property type="term" value="P:carbohydrate metabolic process"/>
    <property type="evidence" value="ECO:0007669"/>
    <property type="project" value="InterPro"/>
</dbReference>
<dbReference type="GO" id="GO:0046168">
    <property type="term" value="P:glycerol-3-phosphate catabolic process"/>
    <property type="evidence" value="ECO:0007669"/>
    <property type="project" value="InterPro"/>
</dbReference>
<dbReference type="GO" id="GO:0019674">
    <property type="term" value="P:NAD metabolic process"/>
    <property type="evidence" value="ECO:0007669"/>
    <property type="project" value="Ensembl"/>
</dbReference>
<dbReference type="GO" id="GO:0006734">
    <property type="term" value="P:NADH metabolic process"/>
    <property type="evidence" value="ECO:0000315"/>
    <property type="project" value="MGI"/>
</dbReference>
<dbReference type="GO" id="GO:2000010">
    <property type="term" value="P:positive regulation of protein localization to cell surface"/>
    <property type="evidence" value="ECO:0007669"/>
    <property type="project" value="Ensembl"/>
</dbReference>
<dbReference type="GO" id="GO:0010765">
    <property type="term" value="P:positive regulation of sodium ion transport"/>
    <property type="evidence" value="ECO:0007669"/>
    <property type="project" value="Ensembl"/>
</dbReference>
<dbReference type="GO" id="GO:0002027">
    <property type="term" value="P:regulation of heart rate"/>
    <property type="evidence" value="ECO:0007669"/>
    <property type="project" value="Ensembl"/>
</dbReference>
<dbReference type="GO" id="GO:0060373">
    <property type="term" value="P:regulation of ventricular cardiac muscle cell membrane depolarization"/>
    <property type="evidence" value="ECO:0007669"/>
    <property type="project" value="Ensembl"/>
</dbReference>
<dbReference type="GO" id="GO:0086005">
    <property type="term" value="P:ventricular cardiac muscle cell action potential"/>
    <property type="evidence" value="ECO:0007669"/>
    <property type="project" value="Ensembl"/>
</dbReference>
<dbReference type="FunFam" id="3.40.50.720:FF:000088">
    <property type="entry name" value="Glycerol-3-phosphate dehydrogenase [NAD(+)]"/>
    <property type="match status" value="1"/>
</dbReference>
<dbReference type="FunFam" id="1.10.1040.10:FF:000084">
    <property type="entry name" value="Glycerol-3-phosphate dehydrogenase [NAD(+)], cytoplasmic"/>
    <property type="match status" value="1"/>
</dbReference>
<dbReference type="Gene3D" id="1.10.1040.10">
    <property type="entry name" value="N-(1-d-carboxylethyl)-l-norvaline Dehydrogenase, domain 2"/>
    <property type="match status" value="1"/>
</dbReference>
<dbReference type="Gene3D" id="3.40.50.720">
    <property type="entry name" value="NAD(P)-binding Rossmann-like Domain"/>
    <property type="match status" value="1"/>
</dbReference>
<dbReference type="InterPro" id="IPR008927">
    <property type="entry name" value="6-PGluconate_DH-like_C_sf"/>
</dbReference>
<dbReference type="InterPro" id="IPR013328">
    <property type="entry name" value="6PGD_dom2"/>
</dbReference>
<dbReference type="InterPro" id="IPR006168">
    <property type="entry name" value="G3P_DH_NAD-dep"/>
</dbReference>
<dbReference type="InterPro" id="IPR006109">
    <property type="entry name" value="G3P_DH_NAD-dep_C"/>
</dbReference>
<dbReference type="InterPro" id="IPR017751">
    <property type="entry name" value="G3P_DH_NAD-dep_euk"/>
</dbReference>
<dbReference type="InterPro" id="IPR011128">
    <property type="entry name" value="G3P_DH_NAD-dep_N"/>
</dbReference>
<dbReference type="InterPro" id="IPR036291">
    <property type="entry name" value="NAD(P)-bd_dom_sf"/>
</dbReference>
<dbReference type="NCBIfam" id="TIGR03376">
    <property type="entry name" value="glycerol3P_DH"/>
    <property type="match status" value="1"/>
</dbReference>
<dbReference type="PANTHER" id="PTHR11728">
    <property type="entry name" value="GLYCEROL-3-PHOSPHATE DEHYDROGENASE"/>
    <property type="match status" value="1"/>
</dbReference>
<dbReference type="PANTHER" id="PTHR11728:SF7">
    <property type="entry name" value="GLYCEROL-3-PHOSPHATE DEHYDROGENASE 1-LIKE PROTEIN"/>
    <property type="match status" value="1"/>
</dbReference>
<dbReference type="Pfam" id="PF07479">
    <property type="entry name" value="NAD_Gly3P_dh_C"/>
    <property type="match status" value="1"/>
</dbReference>
<dbReference type="Pfam" id="PF01210">
    <property type="entry name" value="NAD_Gly3P_dh_N"/>
    <property type="match status" value="1"/>
</dbReference>
<dbReference type="PIRSF" id="PIRSF000114">
    <property type="entry name" value="Glycerol-3-P_dh"/>
    <property type="match status" value="1"/>
</dbReference>
<dbReference type="PRINTS" id="PR00077">
    <property type="entry name" value="GPDHDRGNASE"/>
</dbReference>
<dbReference type="SUPFAM" id="SSF48179">
    <property type="entry name" value="6-phosphogluconate dehydrogenase C-terminal domain-like"/>
    <property type="match status" value="1"/>
</dbReference>
<dbReference type="SUPFAM" id="SSF51735">
    <property type="entry name" value="NAD(P)-binding Rossmann-fold domains"/>
    <property type="match status" value="1"/>
</dbReference>
<proteinExistence type="evidence at protein level"/>
<protein>
    <recommendedName>
        <fullName>Glycerol-3-phosphate dehydrogenase 1-like protein</fullName>
        <ecNumber evidence="2">1.1.1.8</ecNumber>
    </recommendedName>
</protein>
<name>GPD1L_MOUSE</name>
<accession>Q3ULJ0</accession>
<accession>Q6A0D2</accession>
<accession>Q8BVZ7</accession>
<accession>Q8BWM5</accession>
<accession>Q8CFN6</accession>
<organism>
    <name type="scientific">Mus musculus</name>
    <name type="common">Mouse</name>
    <dbReference type="NCBI Taxonomy" id="10090"/>
    <lineage>
        <taxon>Eukaryota</taxon>
        <taxon>Metazoa</taxon>
        <taxon>Chordata</taxon>
        <taxon>Craniata</taxon>
        <taxon>Vertebrata</taxon>
        <taxon>Euteleostomi</taxon>
        <taxon>Mammalia</taxon>
        <taxon>Eutheria</taxon>
        <taxon>Euarchontoglires</taxon>
        <taxon>Glires</taxon>
        <taxon>Rodentia</taxon>
        <taxon>Myomorpha</taxon>
        <taxon>Muroidea</taxon>
        <taxon>Muridae</taxon>
        <taxon>Murinae</taxon>
        <taxon>Mus</taxon>
        <taxon>Mus</taxon>
    </lineage>
</organism>
<sequence>MAAAPLKVCIVGSGNWGSAVAKIIGSNVKTLQKFSSTVKMWVFEETVNGRKLTDIINNDHENVKYLPGHKLPENVVAVPNLSEAVQDADLLVFVIPHQFIHKICDEITGRVPEKALGITLIKGIDEGPDGLKLISDIIREKMGIDISVLMGANIASEVAAEKFCETTIGSKVMQNGLLFKELLQTPNFRITVVDDADTVELCGALKNIVAVGAGFCDGLRCGDNTKAAVIRLGLMEMIAFAKIFCKGQVSTATFLESCGVADLITTCYGGRNRRVAEAFARTGKTIEELEKELLNGQKLQGPQTSAEVYRILRQKGLLDKFPLFTAVYQICYEGRPVTQMLSCLQSHPEHI</sequence>
<feature type="chain" id="PRO_0000286512" description="Glycerol-3-phosphate dehydrogenase 1-like protein">
    <location>
        <begin position="1"/>
        <end position="351"/>
    </location>
</feature>
<feature type="active site" description="Proton acceptor" evidence="1">
    <location>
        <position position="206"/>
    </location>
</feature>
<feature type="binding site" evidence="2">
    <location>
        <begin position="12"/>
        <end position="17"/>
    </location>
    <ligand>
        <name>NAD(+)</name>
        <dbReference type="ChEBI" id="CHEBI:57540"/>
    </ligand>
</feature>
<feature type="binding site" evidence="1">
    <location>
        <position position="122"/>
    </location>
    <ligand>
        <name>substrate</name>
    </ligand>
</feature>
<feature type="binding site" evidence="2">
    <location>
        <position position="155"/>
    </location>
    <ligand>
        <name>NAD(+)</name>
        <dbReference type="ChEBI" id="CHEBI:57540"/>
    </ligand>
</feature>
<feature type="binding site" evidence="1">
    <location>
        <begin position="271"/>
        <end position="272"/>
    </location>
    <ligand>
        <name>substrate</name>
    </ligand>
</feature>
<feature type="binding site" evidence="1">
    <location>
        <position position="271"/>
    </location>
    <ligand>
        <name>NAD(+)</name>
        <dbReference type="ChEBI" id="CHEBI:57540"/>
    </ligand>
</feature>
<feature type="binding site" evidence="2">
    <location>
        <position position="298"/>
    </location>
    <ligand>
        <name>NAD(+)</name>
        <dbReference type="ChEBI" id="CHEBI:57540"/>
    </ligand>
</feature>
<feature type="binding site" evidence="1">
    <location>
        <position position="300"/>
    </location>
    <ligand>
        <name>NAD(+)</name>
        <dbReference type="ChEBI" id="CHEBI:57540"/>
    </ligand>
</feature>
<feature type="splice variant" id="VSP_025062" description="In isoform 2." evidence="3">
    <location>
        <begin position="321"/>
        <end position="351"/>
    </location>
</feature>
<feature type="sequence conflict" description="In Ref. 2; BAC36001." evidence="4" ref="2">
    <original>S</original>
    <variation>G</variation>
    <location>
        <position position="26"/>
    </location>
</feature>
<feature type="sequence conflict" description="In Ref. 2; BAC36001." evidence="4" ref="2">
    <original>F</original>
    <variation>S</variation>
    <location>
        <position position="179"/>
    </location>
</feature>
<feature type="sequence conflict" description="In Ref. 2; BAC36001." evidence="4" ref="2">
    <original>C</original>
    <variation>W</variation>
    <location>
        <position position="202"/>
    </location>
</feature>
<feature type="sequence conflict" description="In Ref. 2; BAC36001." evidence="4" ref="2">
    <original>G</original>
    <variation>V</variation>
    <location>
        <position position="212"/>
    </location>
</feature>
<keyword id="KW-0025">Alternative splicing</keyword>
<keyword id="KW-0963">Cytoplasm</keyword>
<keyword id="KW-0903">Direct protein sequencing</keyword>
<keyword id="KW-0520">NAD</keyword>
<keyword id="KW-0560">Oxidoreductase</keyword>
<keyword id="KW-1185">Reference proteome</keyword>
<evidence type="ECO:0000250" key="1"/>
<evidence type="ECO:0000250" key="2">
    <source>
        <dbReference type="UniProtKB" id="Q8N335"/>
    </source>
</evidence>
<evidence type="ECO:0000303" key="3">
    <source>
    </source>
</evidence>
<evidence type="ECO:0000305" key="4"/>
<reference key="1">
    <citation type="journal article" date="2004" name="DNA Res.">
        <title>Prediction of the coding sequences of mouse homologues of KIAA gene: IV. The complete nucleotide sequences of 500 mouse KIAA-homologous cDNAs identified by screening of terminal sequences of cDNA clones randomly sampled from size-fractionated libraries.</title>
        <authorList>
            <person name="Okazaki N."/>
            <person name="Kikuno R."/>
            <person name="Ohara R."/>
            <person name="Inamoto S."/>
            <person name="Koseki H."/>
            <person name="Hiraoka S."/>
            <person name="Saga Y."/>
            <person name="Seino S."/>
            <person name="Nishimura M."/>
            <person name="Kaisho T."/>
            <person name="Hoshino K."/>
            <person name="Kitamura H."/>
            <person name="Nagase T."/>
            <person name="Ohara O."/>
            <person name="Koga H."/>
        </authorList>
    </citation>
    <scope>NUCLEOTIDE SEQUENCE [LARGE SCALE MRNA] (ISOFORM 1)</scope>
    <source>
        <tissue>Fetal brain</tissue>
    </source>
</reference>
<reference key="2">
    <citation type="journal article" date="2005" name="Science">
        <title>The transcriptional landscape of the mammalian genome.</title>
        <authorList>
            <person name="Carninci P."/>
            <person name="Kasukawa T."/>
            <person name="Katayama S."/>
            <person name="Gough J."/>
            <person name="Frith M.C."/>
            <person name="Maeda N."/>
            <person name="Oyama R."/>
            <person name="Ravasi T."/>
            <person name="Lenhard B."/>
            <person name="Wells C."/>
            <person name="Kodzius R."/>
            <person name="Shimokawa K."/>
            <person name="Bajic V.B."/>
            <person name="Brenner S.E."/>
            <person name="Batalov S."/>
            <person name="Forrest A.R."/>
            <person name="Zavolan M."/>
            <person name="Davis M.J."/>
            <person name="Wilming L.G."/>
            <person name="Aidinis V."/>
            <person name="Allen J.E."/>
            <person name="Ambesi-Impiombato A."/>
            <person name="Apweiler R."/>
            <person name="Aturaliya R.N."/>
            <person name="Bailey T.L."/>
            <person name="Bansal M."/>
            <person name="Baxter L."/>
            <person name="Beisel K.W."/>
            <person name="Bersano T."/>
            <person name="Bono H."/>
            <person name="Chalk A.M."/>
            <person name="Chiu K.P."/>
            <person name="Choudhary V."/>
            <person name="Christoffels A."/>
            <person name="Clutterbuck D.R."/>
            <person name="Crowe M.L."/>
            <person name="Dalla E."/>
            <person name="Dalrymple B.P."/>
            <person name="de Bono B."/>
            <person name="Della Gatta G."/>
            <person name="di Bernardo D."/>
            <person name="Down T."/>
            <person name="Engstrom P."/>
            <person name="Fagiolini M."/>
            <person name="Faulkner G."/>
            <person name="Fletcher C.F."/>
            <person name="Fukushima T."/>
            <person name="Furuno M."/>
            <person name="Futaki S."/>
            <person name="Gariboldi M."/>
            <person name="Georgii-Hemming P."/>
            <person name="Gingeras T.R."/>
            <person name="Gojobori T."/>
            <person name="Green R.E."/>
            <person name="Gustincich S."/>
            <person name="Harbers M."/>
            <person name="Hayashi Y."/>
            <person name="Hensch T.K."/>
            <person name="Hirokawa N."/>
            <person name="Hill D."/>
            <person name="Huminiecki L."/>
            <person name="Iacono M."/>
            <person name="Ikeo K."/>
            <person name="Iwama A."/>
            <person name="Ishikawa T."/>
            <person name="Jakt M."/>
            <person name="Kanapin A."/>
            <person name="Katoh M."/>
            <person name="Kawasawa Y."/>
            <person name="Kelso J."/>
            <person name="Kitamura H."/>
            <person name="Kitano H."/>
            <person name="Kollias G."/>
            <person name="Krishnan S.P."/>
            <person name="Kruger A."/>
            <person name="Kummerfeld S.K."/>
            <person name="Kurochkin I.V."/>
            <person name="Lareau L.F."/>
            <person name="Lazarevic D."/>
            <person name="Lipovich L."/>
            <person name="Liu J."/>
            <person name="Liuni S."/>
            <person name="McWilliam S."/>
            <person name="Madan Babu M."/>
            <person name="Madera M."/>
            <person name="Marchionni L."/>
            <person name="Matsuda H."/>
            <person name="Matsuzawa S."/>
            <person name="Miki H."/>
            <person name="Mignone F."/>
            <person name="Miyake S."/>
            <person name="Morris K."/>
            <person name="Mottagui-Tabar S."/>
            <person name="Mulder N."/>
            <person name="Nakano N."/>
            <person name="Nakauchi H."/>
            <person name="Ng P."/>
            <person name="Nilsson R."/>
            <person name="Nishiguchi S."/>
            <person name="Nishikawa S."/>
            <person name="Nori F."/>
            <person name="Ohara O."/>
            <person name="Okazaki Y."/>
            <person name="Orlando V."/>
            <person name="Pang K.C."/>
            <person name="Pavan W.J."/>
            <person name="Pavesi G."/>
            <person name="Pesole G."/>
            <person name="Petrovsky N."/>
            <person name="Piazza S."/>
            <person name="Reed J."/>
            <person name="Reid J.F."/>
            <person name="Ring B.Z."/>
            <person name="Ringwald M."/>
            <person name="Rost B."/>
            <person name="Ruan Y."/>
            <person name="Salzberg S.L."/>
            <person name="Sandelin A."/>
            <person name="Schneider C."/>
            <person name="Schoenbach C."/>
            <person name="Sekiguchi K."/>
            <person name="Semple C.A."/>
            <person name="Seno S."/>
            <person name="Sessa L."/>
            <person name="Sheng Y."/>
            <person name="Shibata Y."/>
            <person name="Shimada H."/>
            <person name="Shimada K."/>
            <person name="Silva D."/>
            <person name="Sinclair B."/>
            <person name="Sperling S."/>
            <person name="Stupka E."/>
            <person name="Sugiura K."/>
            <person name="Sultana R."/>
            <person name="Takenaka Y."/>
            <person name="Taki K."/>
            <person name="Tammoja K."/>
            <person name="Tan S.L."/>
            <person name="Tang S."/>
            <person name="Taylor M.S."/>
            <person name="Tegner J."/>
            <person name="Teichmann S.A."/>
            <person name="Ueda H.R."/>
            <person name="van Nimwegen E."/>
            <person name="Verardo R."/>
            <person name="Wei C.L."/>
            <person name="Yagi K."/>
            <person name="Yamanishi H."/>
            <person name="Zabarovsky E."/>
            <person name="Zhu S."/>
            <person name="Zimmer A."/>
            <person name="Hide W."/>
            <person name="Bult C."/>
            <person name="Grimmond S.M."/>
            <person name="Teasdale R.D."/>
            <person name="Liu E.T."/>
            <person name="Brusic V."/>
            <person name="Quackenbush J."/>
            <person name="Wahlestedt C."/>
            <person name="Mattick J.S."/>
            <person name="Hume D.A."/>
            <person name="Kai C."/>
            <person name="Sasaki D."/>
            <person name="Tomaru Y."/>
            <person name="Fukuda S."/>
            <person name="Kanamori-Katayama M."/>
            <person name="Suzuki M."/>
            <person name="Aoki J."/>
            <person name="Arakawa T."/>
            <person name="Iida J."/>
            <person name="Imamura K."/>
            <person name="Itoh M."/>
            <person name="Kato T."/>
            <person name="Kawaji H."/>
            <person name="Kawagashira N."/>
            <person name="Kawashima T."/>
            <person name="Kojima M."/>
            <person name="Kondo S."/>
            <person name="Konno H."/>
            <person name="Nakano K."/>
            <person name="Ninomiya N."/>
            <person name="Nishio T."/>
            <person name="Okada M."/>
            <person name="Plessy C."/>
            <person name="Shibata K."/>
            <person name="Shiraki T."/>
            <person name="Suzuki S."/>
            <person name="Tagami M."/>
            <person name="Waki K."/>
            <person name="Watahiki A."/>
            <person name="Okamura-Oho Y."/>
            <person name="Suzuki H."/>
            <person name="Kawai J."/>
            <person name="Hayashizaki Y."/>
        </authorList>
    </citation>
    <scope>NUCLEOTIDE SEQUENCE [LARGE SCALE MRNA] (ISOFORMS 1 AND 2)</scope>
    <source>
        <strain>C57BL/6J</strain>
        <tissue>Stomach</tissue>
        <tissue>Thymus</tissue>
    </source>
</reference>
<reference key="3">
    <citation type="journal article" date="2004" name="Genome Res.">
        <title>The status, quality, and expansion of the NIH full-length cDNA project: the Mammalian Gene Collection (MGC).</title>
        <authorList>
            <consortium name="The MGC Project Team"/>
        </authorList>
    </citation>
    <scope>NUCLEOTIDE SEQUENCE [LARGE SCALE MRNA] (ISOFORM 1)</scope>
    <source>
        <tissue>Eye</tissue>
    </source>
</reference>
<reference key="4">
    <citation type="submission" date="2007-03" db="UniProtKB">
        <authorList>
            <person name="Lubec G."/>
            <person name="Klug S."/>
        </authorList>
    </citation>
    <scope>PROTEIN SEQUENCE OF 207-220</scope>
    <scope>IDENTIFICATION BY MASS SPECTROMETRY</scope>
    <source>
        <tissue>Hippocampus</tissue>
    </source>
</reference>
<reference key="5">
    <citation type="journal article" date="2010" name="Cell">
        <title>A tissue-specific atlas of mouse protein phosphorylation and expression.</title>
        <authorList>
            <person name="Huttlin E.L."/>
            <person name="Jedrychowski M.P."/>
            <person name="Elias J.E."/>
            <person name="Goswami T."/>
            <person name="Rad R."/>
            <person name="Beausoleil S.A."/>
            <person name="Villen J."/>
            <person name="Haas W."/>
            <person name="Sowa M.E."/>
            <person name="Gygi S.P."/>
        </authorList>
    </citation>
    <scope>IDENTIFICATION BY MASS SPECTROMETRY [LARGE SCALE ANALYSIS]</scope>
    <source>
        <tissue>Brain</tissue>
        <tissue>Brown adipose tissue</tissue>
        <tissue>Heart</tissue>
        <tissue>Kidney</tissue>
        <tissue>Liver</tissue>
        <tissue>Lung</tissue>
        <tissue>Pancreas</tissue>
        <tissue>Spleen</tissue>
        <tissue>Testis</tissue>
    </source>
</reference>